<comment type="function">
    <text evidence="1">Ubiquitin-like protein involved in cytoplasm to vacuole transport (Cvt), autophagy vesicles formation, mitophagy, and nucleophagy. Conjugation with ATG5 through a ubiquitin-like conjugating system involving also ATG7 as an E1-like activating enzyme and ATG10 as an E2-like conjugating enzyme, is essential for its function. The ATG12-ATG5 conjugate functions as an E3-like enzyme which is required for lipidation of ATG8 and ATG8 association to the vesicle membranes (By similarity).</text>
</comment>
<comment type="subunit">
    <text evidence="1">Forms a conjugate with ATG5.</text>
</comment>
<comment type="subcellular location">
    <subcellularLocation>
        <location evidence="1">Preautophagosomal structure membrane</location>
        <topology evidence="1">Peripheral membrane protein</topology>
    </subcellularLocation>
</comment>
<comment type="similarity">
    <text evidence="3">Belongs to the ATG12 family.</text>
</comment>
<proteinExistence type="inferred from homology"/>
<accession>Q75EB4</accession>
<reference key="1">
    <citation type="journal article" date="2004" name="Science">
        <title>The Ashbya gossypii genome as a tool for mapping the ancient Saccharomyces cerevisiae genome.</title>
        <authorList>
            <person name="Dietrich F.S."/>
            <person name="Voegeli S."/>
            <person name="Brachat S."/>
            <person name="Lerch A."/>
            <person name="Gates K."/>
            <person name="Steiner S."/>
            <person name="Mohr C."/>
            <person name="Poehlmann R."/>
            <person name="Luedi P."/>
            <person name="Choi S."/>
            <person name="Wing R.A."/>
            <person name="Flavier A."/>
            <person name="Gaffney T.D."/>
            <person name="Philippsen P."/>
        </authorList>
    </citation>
    <scope>NUCLEOTIDE SEQUENCE [LARGE SCALE GENOMIC DNA]</scope>
    <source>
        <strain>ATCC 10895 / CBS 109.51 / FGSC 9923 / NRRL Y-1056</strain>
    </source>
</reference>
<reference key="2">
    <citation type="journal article" date="2013" name="G3 (Bethesda)">
        <title>Genomes of Ashbya fungi isolated from insects reveal four mating-type loci, numerous translocations, lack of transposons, and distinct gene duplications.</title>
        <authorList>
            <person name="Dietrich F.S."/>
            <person name="Voegeli S."/>
            <person name="Kuo S."/>
            <person name="Philippsen P."/>
        </authorList>
    </citation>
    <scope>GENOME REANNOTATION</scope>
    <source>
        <strain>ATCC 10895 / CBS 109.51 / FGSC 9923 / NRRL Y-1056</strain>
    </source>
</reference>
<feature type="chain" id="PRO_0000212474" description="Ubiquitin-like protein ATG12">
    <location>
        <begin position="1"/>
        <end position="189"/>
    </location>
</feature>
<feature type="region of interest" description="Disordered" evidence="2">
    <location>
        <begin position="1"/>
        <end position="72"/>
    </location>
</feature>
<feature type="compositionally biased region" description="Polar residues" evidence="2">
    <location>
        <begin position="10"/>
        <end position="39"/>
    </location>
</feature>
<feature type="compositionally biased region" description="Basic and acidic residues" evidence="2">
    <location>
        <begin position="40"/>
        <end position="49"/>
    </location>
</feature>
<feature type="compositionally biased region" description="Acidic residues" evidence="2">
    <location>
        <begin position="60"/>
        <end position="72"/>
    </location>
</feature>
<feature type="cross-link" description="Glycyl lysine isopeptide (Gly-Lys) (interchain with K-149 in ATG5)" evidence="1">
    <location>
        <position position="189"/>
    </location>
</feature>
<name>ATG12_EREGS</name>
<keyword id="KW-0072">Autophagy</keyword>
<keyword id="KW-1017">Isopeptide bond</keyword>
<keyword id="KW-0472">Membrane</keyword>
<keyword id="KW-0653">Protein transport</keyword>
<keyword id="KW-1185">Reference proteome</keyword>
<keyword id="KW-0813">Transport</keyword>
<keyword id="KW-0833">Ubl conjugation pathway</keyword>
<sequence length="189" mass="20804">MVPLLESETENSISQSQFDSESASAEPTPPQHTQESLQNRLEEYHERLSRLQLPSSSDSECSDIEQESLELEQEVPLSTSVYLAGARSAGGLPSSSELSETPEPPKVAIRFQPIGSVGQVMPQVCRISSAQSFGAVLVFLRRRLRLDTVHCYVSNSFAPTPQQNVGQLWEQFKVNDELVVSYCATVAFG</sequence>
<gene>
    <name type="primary">ATG12</name>
    <name type="ordered locus">AAR160W</name>
</gene>
<protein>
    <recommendedName>
        <fullName>Ubiquitin-like protein ATG12</fullName>
    </recommendedName>
    <alternativeName>
        <fullName>Autophagy-related protein 12</fullName>
    </alternativeName>
</protein>
<dbReference type="EMBL" id="AE016814">
    <property type="protein sequence ID" value="AAS50527.1"/>
    <property type="molecule type" value="Genomic_DNA"/>
</dbReference>
<dbReference type="RefSeq" id="NP_982703.1">
    <property type="nucleotide sequence ID" value="NM_208056.1"/>
</dbReference>
<dbReference type="SMR" id="Q75EB4"/>
<dbReference type="FunCoup" id="Q75EB4">
    <property type="interactions" value="175"/>
</dbReference>
<dbReference type="STRING" id="284811.Q75EB4"/>
<dbReference type="EnsemblFungi" id="AAS50527">
    <property type="protein sequence ID" value="AAS50527"/>
    <property type="gene ID" value="AGOS_AAR160W"/>
</dbReference>
<dbReference type="GeneID" id="4618739"/>
<dbReference type="KEGG" id="ago:AGOS_AAR160W"/>
<dbReference type="eggNOG" id="KOG3439">
    <property type="taxonomic scope" value="Eukaryota"/>
</dbReference>
<dbReference type="HOGENOM" id="CLU_106795_0_0_1"/>
<dbReference type="InParanoid" id="Q75EB4"/>
<dbReference type="OMA" id="DLPMNMS"/>
<dbReference type="OrthoDB" id="10003551at2759"/>
<dbReference type="Proteomes" id="UP000000591">
    <property type="component" value="Chromosome I"/>
</dbReference>
<dbReference type="GO" id="GO:0034274">
    <property type="term" value="C:Atg12-Atg5-Atg16 complex"/>
    <property type="evidence" value="ECO:0000318"/>
    <property type="project" value="GO_Central"/>
</dbReference>
<dbReference type="GO" id="GO:0000421">
    <property type="term" value="C:autophagosome membrane"/>
    <property type="evidence" value="ECO:0000318"/>
    <property type="project" value="GO_Central"/>
</dbReference>
<dbReference type="GO" id="GO:0034045">
    <property type="term" value="C:phagophore assembly site membrane"/>
    <property type="evidence" value="ECO:0000318"/>
    <property type="project" value="GO_Central"/>
</dbReference>
<dbReference type="GO" id="GO:0031386">
    <property type="term" value="F:protein tag activity"/>
    <property type="evidence" value="ECO:0000318"/>
    <property type="project" value="GO_Central"/>
</dbReference>
<dbReference type="GO" id="GO:0000045">
    <property type="term" value="P:autophagosome assembly"/>
    <property type="evidence" value="ECO:0000318"/>
    <property type="project" value="GO_Central"/>
</dbReference>
<dbReference type="GO" id="GO:0097352">
    <property type="term" value="P:autophagosome maturation"/>
    <property type="evidence" value="ECO:0000318"/>
    <property type="project" value="GO_Central"/>
</dbReference>
<dbReference type="GO" id="GO:0000422">
    <property type="term" value="P:autophagy of mitochondrion"/>
    <property type="evidence" value="ECO:0000318"/>
    <property type="project" value="GO_Central"/>
</dbReference>
<dbReference type="GO" id="GO:0061723">
    <property type="term" value="P:glycophagy"/>
    <property type="evidence" value="ECO:0000318"/>
    <property type="project" value="GO_Central"/>
</dbReference>
<dbReference type="GO" id="GO:0034727">
    <property type="term" value="P:piecemeal microautophagy of the nucleus"/>
    <property type="evidence" value="ECO:0000318"/>
    <property type="project" value="GO_Central"/>
</dbReference>
<dbReference type="GO" id="GO:0015031">
    <property type="term" value="P:protein transport"/>
    <property type="evidence" value="ECO:0007669"/>
    <property type="project" value="UniProtKB-KW"/>
</dbReference>
<dbReference type="CDD" id="cd01612">
    <property type="entry name" value="Ubl_ATG12"/>
    <property type="match status" value="1"/>
</dbReference>
<dbReference type="Gene3D" id="3.10.20.90">
    <property type="entry name" value="Phosphatidylinositol 3-kinase Catalytic Subunit, Chain A, domain 1"/>
    <property type="match status" value="1"/>
</dbReference>
<dbReference type="InterPro" id="IPR007242">
    <property type="entry name" value="Atg12"/>
</dbReference>
<dbReference type="InterPro" id="IPR029071">
    <property type="entry name" value="Ubiquitin-like_domsf"/>
</dbReference>
<dbReference type="PANTHER" id="PTHR13385">
    <property type="entry name" value="AUTOPHAGY PROTEIN 12"/>
    <property type="match status" value="1"/>
</dbReference>
<dbReference type="PANTHER" id="PTHR13385:SF0">
    <property type="entry name" value="UBIQUITIN-LIKE PROTEIN ATG12"/>
    <property type="match status" value="1"/>
</dbReference>
<dbReference type="Pfam" id="PF04110">
    <property type="entry name" value="APG12"/>
    <property type="match status" value="1"/>
</dbReference>
<dbReference type="SUPFAM" id="SSF54236">
    <property type="entry name" value="Ubiquitin-like"/>
    <property type="match status" value="1"/>
</dbReference>
<organism>
    <name type="scientific">Eremothecium gossypii (strain ATCC 10895 / CBS 109.51 / FGSC 9923 / NRRL Y-1056)</name>
    <name type="common">Yeast</name>
    <name type="synonym">Ashbya gossypii</name>
    <dbReference type="NCBI Taxonomy" id="284811"/>
    <lineage>
        <taxon>Eukaryota</taxon>
        <taxon>Fungi</taxon>
        <taxon>Dikarya</taxon>
        <taxon>Ascomycota</taxon>
        <taxon>Saccharomycotina</taxon>
        <taxon>Saccharomycetes</taxon>
        <taxon>Saccharomycetales</taxon>
        <taxon>Saccharomycetaceae</taxon>
        <taxon>Eremothecium</taxon>
    </lineage>
</organism>
<evidence type="ECO:0000250" key="1"/>
<evidence type="ECO:0000256" key="2">
    <source>
        <dbReference type="SAM" id="MobiDB-lite"/>
    </source>
</evidence>
<evidence type="ECO:0000305" key="3"/>